<proteinExistence type="inferred from homology"/>
<sequence>MNVTTTRKDLMIVNMGPHHPSMHGVLRLILTLDGEDVIDCEPILGYLHRGMEKIAENRTVIQYLPYVTRWDYLATMFTEAITINGPEQLGNIQVPKRASYIRIIMLELSRIASHLLWLGPFMADIGAQTPFFYIFRERELVYDLFEAATGMRMMHNYFRIGGVAADLPYGWIDKCLDFCDYFLTAVSEYQKLITRNPIFLERVEGVGIIGGEEAINWGLSGPMLRASGIEWDLRKVDRYECYGELDWEIRWQKEGDSLARYLVRMSEMTESIKIIQQALEGIPGGPYENLEIRCFDREKDPEWDGFEYRFISKKPSPTFELPKQELYVRVEAPKGELGIFLIGDQSGFPWRWKIRPPGFINLQILPQLVKRMKLADIMTILGSIDIIMGEVDR</sequence>
<feature type="chain" id="PRO_0000358013" description="NAD(P)H-quinone oxidoreductase subunit H, chloroplastic">
    <location>
        <begin position="1"/>
        <end position="393"/>
    </location>
</feature>
<keyword id="KW-0150">Chloroplast</keyword>
<keyword id="KW-0472">Membrane</keyword>
<keyword id="KW-0520">NAD</keyword>
<keyword id="KW-0521">NADP</keyword>
<keyword id="KW-0934">Plastid</keyword>
<keyword id="KW-0618">Plastoquinone</keyword>
<keyword id="KW-0874">Quinone</keyword>
<keyword id="KW-0793">Thylakoid</keyword>
<keyword id="KW-1278">Translocase</keyword>
<keyword id="KW-0813">Transport</keyword>
<evidence type="ECO:0000255" key="1">
    <source>
        <dbReference type="HAMAP-Rule" id="MF_01358"/>
    </source>
</evidence>
<reference key="1">
    <citation type="journal article" date="2008" name="Nucleic Acids Res.">
        <title>The complete nucleotide sequences of the five genetically distinct plastid genomes of Oenothera, subsection Oenothera: I. Sequence evaluation and plastome evolution.</title>
        <authorList>
            <person name="Greiner S."/>
            <person name="Wang X."/>
            <person name="Rauwolf U."/>
            <person name="Silber M.V."/>
            <person name="Mayer K."/>
            <person name="Meurer J."/>
            <person name="Haberer G."/>
            <person name="Herrmann R.G."/>
        </authorList>
    </citation>
    <scope>NUCLEOTIDE SEQUENCE [LARGE SCALE GENOMIC DNA]</scope>
    <source>
        <strain>cv. Suaveolens Grado</strain>
    </source>
</reference>
<geneLocation type="chloroplast"/>
<organism>
    <name type="scientific">Oenothera biennis</name>
    <name type="common">German evening primrose</name>
    <name type="synonym">Onagra biennis</name>
    <dbReference type="NCBI Taxonomy" id="3942"/>
    <lineage>
        <taxon>Eukaryota</taxon>
        <taxon>Viridiplantae</taxon>
        <taxon>Streptophyta</taxon>
        <taxon>Embryophyta</taxon>
        <taxon>Tracheophyta</taxon>
        <taxon>Spermatophyta</taxon>
        <taxon>Magnoliopsida</taxon>
        <taxon>eudicotyledons</taxon>
        <taxon>Gunneridae</taxon>
        <taxon>Pentapetalae</taxon>
        <taxon>rosids</taxon>
        <taxon>malvids</taxon>
        <taxon>Myrtales</taxon>
        <taxon>Onagraceae</taxon>
        <taxon>Onagroideae</taxon>
        <taxon>Onagreae</taxon>
        <taxon>Oenothera</taxon>
    </lineage>
</organism>
<name>NDHH_OENBI</name>
<accession>B0Z515</accession>
<comment type="function">
    <text evidence="1">NDH shuttles electrons from NAD(P)H:plastoquinone, via FMN and iron-sulfur (Fe-S) centers, to quinones in the photosynthetic chain and possibly in a chloroplast respiratory chain. The immediate electron acceptor for the enzyme in this species is believed to be plastoquinone. Couples the redox reaction to proton translocation, and thus conserves the redox energy in a proton gradient.</text>
</comment>
<comment type="catalytic activity">
    <reaction evidence="1">
        <text>a plastoquinone + NADH + (n+1) H(+)(in) = a plastoquinol + NAD(+) + n H(+)(out)</text>
        <dbReference type="Rhea" id="RHEA:42608"/>
        <dbReference type="Rhea" id="RHEA-COMP:9561"/>
        <dbReference type="Rhea" id="RHEA-COMP:9562"/>
        <dbReference type="ChEBI" id="CHEBI:15378"/>
        <dbReference type="ChEBI" id="CHEBI:17757"/>
        <dbReference type="ChEBI" id="CHEBI:57540"/>
        <dbReference type="ChEBI" id="CHEBI:57945"/>
        <dbReference type="ChEBI" id="CHEBI:62192"/>
    </reaction>
</comment>
<comment type="catalytic activity">
    <reaction evidence="1">
        <text>a plastoquinone + NADPH + (n+1) H(+)(in) = a plastoquinol + NADP(+) + n H(+)(out)</text>
        <dbReference type="Rhea" id="RHEA:42612"/>
        <dbReference type="Rhea" id="RHEA-COMP:9561"/>
        <dbReference type="Rhea" id="RHEA-COMP:9562"/>
        <dbReference type="ChEBI" id="CHEBI:15378"/>
        <dbReference type="ChEBI" id="CHEBI:17757"/>
        <dbReference type="ChEBI" id="CHEBI:57783"/>
        <dbReference type="ChEBI" id="CHEBI:58349"/>
        <dbReference type="ChEBI" id="CHEBI:62192"/>
    </reaction>
</comment>
<comment type="subunit">
    <text evidence="1">NDH is composed of at least 16 different subunits, 5 of which are encoded in the nucleus.</text>
</comment>
<comment type="subcellular location">
    <subcellularLocation>
        <location evidence="1">Plastid</location>
        <location evidence="1">Chloroplast thylakoid membrane</location>
        <topology evidence="1">Peripheral membrane protein</topology>
        <orientation evidence="1">Stromal side</orientation>
    </subcellularLocation>
</comment>
<comment type="similarity">
    <text evidence="1">Belongs to the complex I 49 kDa subunit family.</text>
</comment>
<protein>
    <recommendedName>
        <fullName evidence="1">NAD(P)H-quinone oxidoreductase subunit H, chloroplastic</fullName>
        <ecNumber evidence="1">7.1.1.-</ecNumber>
    </recommendedName>
    <alternativeName>
        <fullName>NAD(P)H dehydrogenase subunit H</fullName>
    </alternativeName>
    <alternativeName>
        <fullName evidence="1">NADH-plastoquinone oxidoreductase 49 kDa subunit</fullName>
    </alternativeName>
    <alternativeName>
        <fullName evidence="1">NADH-plastoquinone oxidoreductase subunit H</fullName>
    </alternativeName>
</protein>
<dbReference type="EC" id="7.1.1.-" evidence="1"/>
<dbReference type="EMBL" id="EU262889">
    <property type="protein sequence ID" value="ABW98927.1"/>
    <property type="molecule type" value="Genomic_DNA"/>
</dbReference>
<dbReference type="RefSeq" id="YP_001687422.1">
    <property type="nucleotide sequence ID" value="NC_010361.1"/>
</dbReference>
<dbReference type="SMR" id="B0Z515"/>
<dbReference type="GeneID" id="5952001"/>
<dbReference type="GO" id="GO:0009535">
    <property type="term" value="C:chloroplast thylakoid membrane"/>
    <property type="evidence" value="ECO:0007669"/>
    <property type="project" value="UniProtKB-SubCell"/>
</dbReference>
<dbReference type="GO" id="GO:0051287">
    <property type="term" value="F:NAD binding"/>
    <property type="evidence" value="ECO:0007669"/>
    <property type="project" value="InterPro"/>
</dbReference>
<dbReference type="GO" id="GO:0016655">
    <property type="term" value="F:oxidoreductase activity, acting on NAD(P)H, quinone or similar compound as acceptor"/>
    <property type="evidence" value="ECO:0007669"/>
    <property type="project" value="UniProtKB-UniRule"/>
</dbReference>
<dbReference type="GO" id="GO:0048038">
    <property type="term" value="F:quinone binding"/>
    <property type="evidence" value="ECO:0007669"/>
    <property type="project" value="UniProtKB-KW"/>
</dbReference>
<dbReference type="GO" id="GO:0019684">
    <property type="term" value="P:photosynthesis, light reaction"/>
    <property type="evidence" value="ECO:0007669"/>
    <property type="project" value="UniProtKB-UniRule"/>
</dbReference>
<dbReference type="FunFam" id="1.10.645.10:FF:000003">
    <property type="entry name" value="NAD(P)H-quinone oxidoreductase subunit H, chloroplastic"/>
    <property type="match status" value="1"/>
</dbReference>
<dbReference type="Gene3D" id="1.10.645.10">
    <property type="entry name" value="Cytochrome-c3 Hydrogenase, chain B"/>
    <property type="match status" value="1"/>
</dbReference>
<dbReference type="HAMAP" id="MF_01358">
    <property type="entry name" value="NDH1_NuoD"/>
    <property type="match status" value="1"/>
</dbReference>
<dbReference type="InterPro" id="IPR001135">
    <property type="entry name" value="NADH_Q_OxRdtase_suD"/>
</dbReference>
<dbReference type="InterPro" id="IPR014029">
    <property type="entry name" value="NADH_UbQ_OxRdtase_49kDa_CS"/>
</dbReference>
<dbReference type="InterPro" id="IPR022885">
    <property type="entry name" value="NDH1_su_D/H"/>
</dbReference>
<dbReference type="InterPro" id="IPR029014">
    <property type="entry name" value="NiFe-Hase_large"/>
</dbReference>
<dbReference type="NCBIfam" id="NF004739">
    <property type="entry name" value="PRK06075.1"/>
    <property type="match status" value="1"/>
</dbReference>
<dbReference type="NCBIfam" id="NF005649">
    <property type="entry name" value="PRK07415.1"/>
    <property type="match status" value="1"/>
</dbReference>
<dbReference type="PANTHER" id="PTHR11993:SF10">
    <property type="entry name" value="NADH DEHYDROGENASE [UBIQUINONE] IRON-SULFUR PROTEIN 2, MITOCHONDRIAL"/>
    <property type="match status" value="1"/>
</dbReference>
<dbReference type="PANTHER" id="PTHR11993">
    <property type="entry name" value="NADH-UBIQUINONE OXIDOREDUCTASE 49 KDA SUBUNIT"/>
    <property type="match status" value="1"/>
</dbReference>
<dbReference type="Pfam" id="PF00346">
    <property type="entry name" value="Complex1_49kDa"/>
    <property type="match status" value="1"/>
</dbReference>
<dbReference type="SUPFAM" id="SSF56762">
    <property type="entry name" value="HydB/Nqo4-like"/>
    <property type="match status" value="1"/>
</dbReference>
<dbReference type="PROSITE" id="PS00535">
    <property type="entry name" value="COMPLEX1_49K"/>
    <property type="match status" value="1"/>
</dbReference>
<gene>
    <name evidence="1" type="primary">ndhH</name>
</gene>